<keyword id="KW-0067">ATP-binding</keyword>
<keyword id="KW-0143">Chaperone</keyword>
<keyword id="KW-0963">Cytoplasm</keyword>
<keyword id="KW-0378">Hydrolase</keyword>
<keyword id="KW-0547">Nucleotide-binding</keyword>
<gene>
    <name evidence="1" type="primary">ravA</name>
    <name type="ordered locus">YpsIP31758_0005</name>
</gene>
<reference key="1">
    <citation type="journal article" date="2007" name="PLoS Genet.">
        <title>The complete genome sequence of Yersinia pseudotuberculosis IP31758, the causative agent of Far East scarlet-like fever.</title>
        <authorList>
            <person name="Eppinger M."/>
            <person name="Rosovitz M.J."/>
            <person name="Fricke W.F."/>
            <person name="Rasko D.A."/>
            <person name="Kokorina G."/>
            <person name="Fayolle C."/>
            <person name="Lindler L.E."/>
            <person name="Carniel E."/>
            <person name="Ravel J."/>
        </authorList>
    </citation>
    <scope>NUCLEOTIDE SEQUENCE [LARGE SCALE GENOMIC DNA]</scope>
    <source>
        <strain>IP 31758</strain>
    </source>
</reference>
<protein>
    <recommendedName>
        <fullName evidence="1">Regulatory ATPase RavA</fullName>
        <ecNumber evidence="1">3.6.1.-</ecNumber>
    </recommendedName>
    <alternativeName>
        <fullName evidence="1">Regulatory ATPase variant A</fullName>
    </alternativeName>
</protein>
<accession>A7FCN1</accession>
<evidence type="ECO:0000255" key="1">
    <source>
        <dbReference type="HAMAP-Rule" id="MF_01625"/>
    </source>
</evidence>
<proteinExistence type="inferred from homology"/>
<dbReference type="EC" id="3.6.1.-" evidence="1"/>
<dbReference type="EMBL" id="CP000720">
    <property type="protein sequence ID" value="ABS45775.1"/>
    <property type="molecule type" value="Genomic_DNA"/>
</dbReference>
<dbReference type="RefSeq" id="WP_011991003.1">
    <property type="nucleotide sequence ID" value="NC_009708.1"/>
</dbReference>
<dbReference type="SMR" id="A7FCN1"/>
<dbReference type="KEGG" id="ypi:YpsIP31758_0005"/>
<dbReference type="HOGENOM" id="CLU_018678_1_0_6"/>
<dbReference type="Proteomes" id="UP000002412">
    <property type="component" value="Chromosome"/>
</dbReference>
<dbReference type="GO" id="GO:0005737">
    <property type="term" value="C:cytoplasm"/>
    <property type="evidence" value="ECO:0007669"/>
    <property type="project" value="UniProtKB-SubCell"/>
</dbReference>
<dbReference type="GO" id="GO:0005524">
    <property type="term" value="F:ATP binding"/>
    <property type="evidence" value="ECO:0007669"/>
    <property type="project" value="UniProtKB-KW"/>
</dbReference>
<dbReference type="GO" id="GO:0016887">
    <property type="term" value="F:ATP hydrolysis activity"/>
    <property type="evidence" value="ECO:0007669"/>
    <property type="project" value="UniProtKB-UniRule"/>
</dbReference>
<dbReference type="CDD" id="cd00009">
    <property type="entry name" value="AAA"/>
    <property type="match status" value="1"/>
</dbReference>
<dbReference type="Gene3D" id="1.20.58.1510">
    <property type="match status" value="1"/>
</dbReference>
<dbReference type="Gene3D" id="2.40.128.430">
    <property type="match status" value="1"/>
</dbReference>
<dbReference type="Gene3D" id="3.40.50.300">
    <property type="entry name" value="P-loop containing nucleotide triphosphate hydrolases"/>
    <property type="match status" value="1"/>
</dbReference>
<dbReference type="HAMAP" id="MF_01625">
    <property type="entry name" value="ATPase_RavA"/>
    <property type="match status" value="1"/>
</dbReference>
<dbReference type="InterPro" id="IPR003593">
    <property type="entry name" value="AAA+_ATPase"/>
</dbReference>
<dbReference type="InterPro" id="IPR023671">
    <property type="entry name" value="ATPase_RavA"/>
</dbReference>
<dbReference type="InterPro" id="IPR022547">
    <property type="entry name" value="ATPase_RavA_C"/>
</dbReference>
<dbReference type="InterPro" id="IPR045427">
    <property type="entry name" value="MoxR"/>
</dbReference>
<dbReference type="InterPro" id="IPR027417">
    <property type="entry name" value="P-loop_NTPase"/>
</dbReference>
<dbReference type="InterPro" id="IPR041538">
    <property type="entry name" value="RavA-like_AAA_lid"/>
</dbReference>
<dbReference type="InterPro" id="IPR050513">
    <property type="entry name" value="RavA_ATPases"/>
</dbReference>
<dbReference type="InterPro" id="IPR046898">
    <property type="entry name" value="RavA_LARA_dom"/>
</dbReference>
<dbReference type="InterPro" id="IPR046932">
    <property type="entry name" value="RavA_LARA_sf"/>
</dbReference>
<dbReference type="NCBIfam" id="NF010054">
    <property type="entry name" value="PRK13531.1"/>
    <property type="match status" value="1"/>
</dbReference>
<dbReference type="PANTHER" id="PTHR32204">
    <property type="entry name" value="ATPASE RAVA"/>
    <property type="match status" value="1"/>
</dbReference>
<dbReference type="PANTHER" id="PTHR32204:SF0">
    <property type="entry name" value="ATPASE RAVA"/>
    <property type="match status" value="1"/>
</dbReference>
<dbReference type="Pfam" id="PF17868">
    <property type="entry name" value="AAA_lid_8"/>
    <property type="match status" value="1"/>
</dbReference>
<dbReference type="Pfam" id="PF12592">
    <property type="entry name" value="ATPase_RavA_C"/>
    <property type="match status" value="1"/>
</dbReference>
<dbReference type="Pfam" id="PF20030">
    <property type="entry name" value="bpMoxR"/>
    <property type="match status" value="1"/>
</dbReference>
<dbReference type="Pfam" id="PF20265">
    <property type="entry name" value="LARA_dom"/>
    <property type="match status" value="1"/>
</dbReference>
<dbReference type="SMART" id="SM00382">
    <property type="entry name" value="AAA"/>
    <property type="match status" value="1"/>
</dbReference>
<dbReference type="SUPFAM" id="SSF52540">
    <property type="entry name" value="P-loop containing nucleoside triphosphate hydrolases"/>
    <property type="match status" value="1"/>
</dbReference>
<organism>
    <name type="scientific">Yersinia pseudotuberculosis serotype O:1b (strain IP 31758)</name>
    <dbReference type="NCBI Taxonomy" id="349747"/>
    <lineage>
        <taxon>Bacteria</taxon>
        <taxon>Pseudomonadati</taxon>
        <taxon>Pseudomonadota</taxon>
        <taxon>Gammaproteobacteria</taxon>
        <taxon>Enterobacterales</taxon>
        <taxon>Yersiniaceae</taxon>
        <taxon>Yersinia</taxon>
    </lineage>
</organism>
<comment type="function">
    <text evidence="1">Component of the RavA-ViaA chaperone complex, which may act on the membrane to optimize the function of some of the respiratory chains. RavA functions as an ATPase.</text>
</comment>
<comment type="catalytic activity">
    <reaction evidence="1">
        <text>ATP + H2O = ADP + phosphate + H(+)</text>
        <dbReference type="Rhea" id="RHEA:13065"/>
        <dbReference type="ChEBI" id="CHEBI:15377"/>
        <dbReference type="ChEBI" id="CHEBI:15378"/>
        <dbReference type="ChEBI" id="CHEBI:30616"/>
        <dbReference type="ChEBI" id="CHEBI:43474"/>
        <dbReference type="ChEBI" id="CHEBI:456216"/>
    </reaction>
</comment>
<comment type="activity regulation">
    <text evidence="1">ATPase activity is stimulated by ViaA.</text>
</comment>
<comment type="subunit">
    <text evidence="1">Homohexamer. Interacts with ViaA.</text>
</comment>
<comment type="subcellular location">
    <subcellularLocation>
        <location evidence="1">Cytoplasm</location>
    </subcellularLocation>
</comment>
<comment type="similarity">
    <text evidence="1">Belongs to the RavA family.</text>
</comment>
<feature type="chain" id="PRO_1000069602" description="Regulatory ATPase RavA">
    <location>
        <begin position="1"/>
        <end position="512"/>
    </location>
</feature>
<feature type="binding site" evidence="1">
    <location>
        <position position="23"/>
    </location>
    <ligand>
        <name>ADP</name>
        <dbReference type="ChEBI" id="CHEBI:456216"/>
    </ligand>
</feature>
<feature type="binding site" evidence="1">
    <location>
        <position position="49"/>
    </location>
    <ligand>
        <name>ADP</name>
        <dbReference type="ChEBI" id="CHEBI:456216"/>
    </ligand>
</feature>
<feature type="binding site" evidence="1">
    <location>
        <position position="50"/>
    </location>
    <ligand>
        <name>ADP</name>
        <dbReference type="ChEBI" id="CHEBI:456216"/>
    </ligand>
</feature>
<feature type="binding site" evidence="1">
    <location>
        <position position="51"/>
    </location>
    <ligand>
        <name>ADP</name>
        <dbReference type="ChEBI" id="CHEBI:456216"/>
    </ligand>
</feature>
<feature type="binding site" evidence="1">
    <location>
        <position position="52"/>
    </location>
    <ligand>
        <name>ADP</name>
        <dbReference type="ChEBI" id="CHEBI:456216"/>
    </ligand>
</feature>
<feature type="binding site" evidence="1">
    <location>
        <position position="53"/>
    </location>
    <ligand>
        <name>ADP</name>
        <dbReference type="ChEBI" id="CHEBI:456216"/>
    </ligand>
</feature>
<feature type="binding site" evidence="1">
    <location>
        <position position="54"/>
    </location>
    <ligand>
        <name>ADP</name>
        <dbReference type="ChEBI" id="CHEBI:456216"/>
    </ligand>
</feature>
<feature type="binding site" evidence="1">
    <location>
        <position position="196"/>
    </location>
    <ligand>
        <name>ADP</name>
        <dbReference type="ChEBI" id="CHEBI:456216"/>
    </ligand>
</feature>
<name>RAVA_YERP3</name>
<sequence length="512" mass="58731">MAQSSQLAERISRLSHALESGLYERQEAIRLCLLAALSGESVFLLGPPGIAKSLIARRLKFAFRHARAFEYLMTRFSTPEEVFGPLSIQALKEEGRYQRMTGGYLPEAEIVFLDEIWKAGPAILNTLLTAINERRFRNGDREDSIPMRLLVTASNELPDADSSLEALYDRMLIRLWLDRVQEKQNFRSLLISRQNENHNPVAENLSITDEEFHQWQPLIDKITLPDHCFELIFQLRQRLSALEHAPYVSDRRWKKALRLLQASAFFSGRDEITPIDLILLKDCLWHDLNSFKLLQQQLEQLLTEQGYQQQSLLMKLQDINSKWLQHQQQQSDHQALTVVKQSGMFSRKAQYALPDNLTDSTLTLLLQKPLNLHDIQVNHLQVDKEALAQWLNKGGALRAKLNGVGYAQSIDAEIDDQLHIIILDVSRQPSTLSLPGATTTSVPPELLLALTKLESTLAEQRRLFSQHQPCLFTPSSWLAKIEASLLQVVEQLQFQQIQFQQRQFQQQKHSGH</sequence>